<feature type="chain" id="PRO_0000056867" description="Anthranilate synthase">
    <location>
        <begin position="1"/>
        <end position="732"/>
    </location>
</feature>
<feature type="domain" description="Glutamine amidotransferase type-1" evidence="2">
    <location>
        <begin position="533"/>
        <end position="728"/>
    </location>
</feature>
<feature type="active site" description="Nucleophile; for GATase activity" evidence="2">
    <location>
        <position position="610"/>
    </location>
</feature>
<feature type="active site" description="For GATase activity" evidence="2">
    <location>
        <position position="699"/>
    </location>
</feature>
<feature type="active site" description="For GATase activity" evidence="2">
    <location>
        <position position="701"/>
    </location>
</feature>
<feature type="binding site" evidence="1">
    <location>
        <begin position="583"/>
        <end position="585"/>
    </location>
    <ligand>
        <name>L-glutamine</name>
        <dbReference type="ChEBI" id="CHEBI:58359"/>
    </ligand>
</feature>
<feature type="binding site" evidence="1">
    <location>
        <position position="614"/>
    </location>
    <ligand>
        <name>L-glutamine</name>
        <dbReference type="ChEBI" id="CHEBI:58359"/>
    </ligand>
</feature>
<feature type="binding site" evidence="1">
    <location>
        <begin position="660"/>
        <end position="661"/>
    </location>
    <ligand>
        <name>L-glutamine</name>
        <dbReference type="ChEBI" id="CHEBI:58359"/>
    </ligand>
</feature>
<organism>
    <name type="scientific">Azospirillum brasilense</name>
    <dbReference type="NCBI Taxonomy" id="192"/>
    <lineage>
        <taxon>Bacteria</taxon>
        <taxon>Pseudomonadati</taxon>
        <taxon>Pseudomonadota</taxon>
        <taxon>Alphaproteobacteria</taxon>
        <taxon>Rhodospirillales</taxon>
        <taxon>Azospirillaceae</taxon>
        <taxon>Azospirillum</taxon>
    </lineage>
</organism>
<reference key="1">
    <citation type="journal article" date="1997" name="Curr. Microbiol.">
        <title>Isolation and characterization of the Azospirillum brasilense trpE(G) gene, encoding anthranilate synthase.</title>
        <authorList>
            <person name="de Troch P."/>
            <person name="Dosselaere F."/>
            <person name="Keijers V."/>
            <person name="de Wilde P."/>
            <person name="Vanderleyden J."/>
        </authorList>
    </citation>
    <scope>NUCLEOTIDE SEQUENCE [GENOMIC DNA]</scope>
    <source>
        <strain>ATCC 29145 / DSM 1690 / IMET 11303 / Sp7</strain>
    </source>
</reference>
<sequence>MYPADLLASPDLLEPLRFQTRGGVTVTRRATALDPRTALDPVIDALDRRRGLLLSSGVEAPGRYRRHALGFTDPAVALTARGRTLRIDALNGRGQVLLPAVAEALRGLEALAGLEEAPSRVTASSASPAPLPGEERSRQPSVFSVLRAVLDLFAAPDDPLLGLYGAFAYDLAFQFEPIRQRLERPDDQRDLLLYLPDRLVALDPIAGLARLVAYEFITAAGSTEGLECGGRDHPYRPDTNAEAGCDHAPGDYQRVVESAKAAFRRGDLFEVVPGQTFAEPCADAPSSVFRRLRAANPAPYEAFVNLGRGEFLVAASPEMYVRVAGGRVETCPISGTVARGADALGDAAQVLRLLTSAKDAAELTMCTDVDRNDKARVCEPGSVRVIGRRMIELYSRLIHTVDHVEGRLRSGMDALDAFLTHSWAVTVTGAPKRWAMQFLEDTEQSPRRWYGGAFGRLGFDGGMDTGLTLRTIRMAEGVAYVRAGATLLSDSDPDAEDAECRLKAAAFRDAIRGTAAGAAPTLPAAPRGGEGRRVLLVDHDDSFVHTLADYLRQTGASVTTLRHSHARAALAERRPDLVVLSPGPGRPADFDVAGTIDAALALGLPVFGVCLGLQGMVERFGGALDVLPEPVHGKATEVRVLGGALFAGLPERLTVGRYHSLVARRDRLPADLTVTAETADGLVMAVEHRRLPLAAVQFHPESILSLDGGAGLALLGNVMDRLAAGALTDAAA</sequence>
<dbReference type="EC" id="4.1.3.27"/>
<dbReference type="EMBL" id="U44127">
    <property type="protein sequence ID" value="AAC45141.1"/>
    <property type="molecule type" value="Genomic_DNA"/>
</dbReference>
<dbReference type="SMR" id="P50872"/>
<dbReference type="MEROPS" id="C26.A25"/>
<dbReference type="UniPathway" id="UPA00035">
    <property type="reaction ID" value="UER00040"/>
</dbReference>
<dbReference type="GO" id="GO:0004049">
    <property type="term" value="F:anthranilate synthase activity"/>
    <property type="evidence" value="ECO:0007669"/>
    <property type="project" value="UniProtKB-EC"/>
</dbReference>
<dbReference type="GO" id="GO:0000162">
    <property type="term" value="P:L-tryptophan biosynthetic process"/>
    <property type="evidence" value="ECO:0007669"/>
    <property type="project" value="UniProtKB-UniPathway"/>
</dbReference>
<dbReference type="CDD" id="cd01743">
    <property type="entry name" value="GATase1_Anthranilate_Synthase"/>
    <property type="match status" value="1"/>
</dbReference>
<dbReference type="Gene3D" id="3.40.50.880">
    <property type="match status" value="1"/>
</dbReference>
<dbReference type="Gene3D" id="3.60.120.10">
    <property type="entry name" value="Anthranilate synthase"/>
    <property type="match status" value="1"/>
</dbReference>
<dbReference type="InterPro" id="IPR005801">
    <property type="entry name" value="ADC_synthase"/>
</dbReference>
<dbReference type="InterPro" id="IPR019999">
    <property type="entry name" value="Anth_synth_I-like"/>
</dbReference>
<dbReference type="InterPro" id="IPR006805">
    <property type="entry name" value="Anth_synth_I_N"/>
</dbReference>
<dbReference type="InterPro" id="IPR015890">
    <property type="entry name" value="Chorismate_C"/>
</dbReference>
<dbReference type="InterPro" id="IPR029062">
    <property type="entry name" value="Class_I_gatase-like"/>
</dbReference>
<dbReference type="InterPro" id="IPR017926">
    <property type="entry name" value="GATASE"/>
</dbReference>
<dbReference type="InterPro" id="IPR010112">
    <property type="entry name" value="TrpE-G_bact"/>
</dbReference>
<dbReference type="InterPro" id="IPR006221">
    <property type="entry name" value="TrpG/PapA_dom"/>
</dbReference>
<dbReference type="NCBIfam" id="NF010081">
    <property type="entry name" value="PRK13566.1"/>
    <property type="match status" value="1"/>
</dbReference>
<dbReference type="NCBIfam" id="TIGR01815">
    <property type="entry name" value="TrpE-clade3"/>
    <property type="match status" value="1"/>
</dbReference>
<dbReference type="NCBIfam" id="TIGR00566">
    <property type="entry name" value="trpG_papA"/>
    <property type="match status" value="1"/>
</dbReference>
<dbReference type="PANTHER" id="PTHR11236">
    <property type="entry name" value="AMINOBENZOATE/ANTHRANILATE SYNTHASE"/>
    <property type="match status" value="1"/>
</dbReference>
<dbReference type="PANTHER" id="PTHR11236:SF9">
    <property type="entry name" value="ANTHRANILATE SYNTHASE COMPONENT 1"/>
    <property type="match status" value="1"/>
</dbReference>
<dbReference type="Pfam" id="PF04715">
    <property type="entry name" value="Anth_synt_I_N"/>
    <property type="match status" value="1"/>
</dbReference>
<dbReference type="Pfam" id="PF00425">
    <property type="entry name" value="Chorismate_bind"/>
    <property type="match status" value="1"/>
</dbReference>
<dbReference type="Pfam" id="PF00117">
    <property type="entry name" value="GATase"/>
    <property type="match status" value="1"/>
</dbReference>
<dbReference type="PIRSF" id="PIRSF036934">
    <property type="entry name" value="TrpE-G"/>
    <property type="match status" value="1"/>
</dbReference>
<dbReference type="PRINTS" id="PR00097">
    <property type="entry name" value="ANTSNTHASEII"/>
</dbReference>
<dbReference type="PRINTS" id="PR00096">
    <property type="entry name" value="GATASE"/>
</dbReference>
<dbReference type="SUPFAM" id="SSF56322">
    <property type="entry name" value="ADC synthase"/>
    <property type="match status" value="1"/>
</dbReference>
<dbReference type="SUPFAM" id="SSF52317">
    <property type="entry name" value="Class I glutamine amidotransferase-like"/>
    <property type="match status" value="1"/>
</dbReference>
<dbReference type="PROSITE" id="PS51273">
    <property type="entry name" value="GATASE_TYPE_1"/>
    <property type="match status" value="1"/>
</dbReference>
<protein>
    <recommendedName>
        <fullName>Anthranilate synthase</fullName>
        <ecNumber>4.1.3.27</ecNumber>
    </recommendedName>
    <domain>
        <recommendedName>
            <fullName>Glutamine amidotransferase</fullName>
        </recommendedName>
    </domain>
</protein>
<proteinExistence type="predicted"/>
<accession>P50872</accession>
<evidence type="ECO:0000250" key="1">
    <source>
        <dbReference type="UniProtKB" id="P00900"/>
    </source>
</evidence>
<evidence type="ECO:0000255" key="2">
    <source>
        <dbReference type="PROSITE-ProRule" id="PRU00605"/>
    </source>
</evidence>
<comment type="catalytic activity">
    <reaction>
        <text>chorismate + L-glutamine = anthranilate + pyruvate + L-glutamate + H(+)</text>
        <dbReference type="Rhea" id="RHEA:21732"/>
        <dbReference type="ChEBI" id="CHEBI:15361"/>
        <dbReference type="ChEBI" id="CHEBI:15378"/>
        <dbReference type="ChEBI" id="CHEBI:16567"/>
        <dbReference type="ChEBI" id="CHEBI:29748"/>
        <dbReference type="ChEBI" id="CHEBI:29985"/>
        <dbReference type="ChEBI" id="CHEBI:58359"/>
        <dbReference type="EC" id="4.1.3.27"/>
    </reaction>
</comment>
<comment type="pathway">
    <text>Amino-acid biosynthesis; L-tryptophan biosynthesis; L-tryptophan from chorismate: step 1/5.</text>
</comment>
<keyword id="KW-0028">Amino-acid biosynthesis</keyword>
<keyword id="KW-0057">Aromatic amino acid biosynthesis</keyword>
<keyword id="KW-0315">Glutamine amidotransferase</keyword>
<keyword id="KW-0456">Lyase</keyword>
<keyword id="KW-0822">Tryptophan biosynthesis</keyword>
<gene>
    <name type="primary">trpE(G)</name>
</gene>
<name>TRPE_AZOBR</name>